<name>UVRA_MYCTO</name>
<proteinExistence type="inferred from homology"/>
<evidence type="ECO:0000255" key="1">
    <source>
        <dbReference type="HAMAP-Rule" id="MF_00205"/>
    </source>
</evidence>
<evidence type="ECO:0000305" key="2"/>
<protein>
    <recommendedName>
        <fullName evidence="1">UvrABC system protein A</fullName>
        <shortName evidence="1">UvrA protein</shortName>
    </recommendedName>
    <alternativeName>
        <fullName evidence="1">Excinuclease ABC subunit A</fullName>
    </alternativeName>
</protein>
<accession>P9WQK6</accession>
<accession>L0T7H9</accession>
<accession>P63380</accession>
<accession>P94972</accession>
<keyword id="KW-0067">ATP-binding</keyword>
<keyword id="KW-0963">Cytoplasm</keyword>
<keyword id="KW-0227">DNA damage</keyword>
<keyword id="KW-0228">DNA excision</keyword>
<keyword id="KW-0234">DNA repair</keyword>
<keyword id="KW-0238">DNA-binding</keyword>
<keyword id="KW-0267">Excision nuclease</keyword>
<keyword id="KW-0479">Metal-binding</keyword>
<keyword id="KW-0547">Nucleotide-binding</keyword>
<keyword id="KW-1185">Reference proteome</keyword>
<keyword id="KW-0677">Repeat</keyword>
<keyword id="KW-0742">SOS response</keyword>
<keyword id="KW-0862">Zinc</keyword>
<keyword id="KW-0863">Zinc-finger</keyword>
<feature type="chain" id="PRO_0000426759" description="UvrABC system protein A">
    <location>
        <begin position="1"/>
        <end position="972"/>
    </location>
</feature>
<feature type="domain" description="ABC transporter 1" evidence="1">
    <location>
        <begin position="315"/>
        <end position="601"/>
    </location>
</feature>
<feature type="domain" description="ABC transporter 2" evidence="1">
    <location>
        <begin position="621"/>
        <end position="950"/>
    </location>
</feature>
<feature type="zinc finger region" description="C4-type; atypical" evidence="1">
    <location>
        <begin position="257"/>
        <end position="285"/>
    </location>
</feature>
<feature type="zinc finger region" description="C4-type" evidence="1">
    <location>
        <begin position="753"/>
        <end position="779"/>
    </location>
</feature>
<feature type="binding site" evidence="1">
    <location>
        <begin position="32"/>
        <end position="39"/>
    </location>
    <ligand>
        <name>ATP</name>
        <dbReference type="ChEBI" id="CHEBI:30616"/>
    </ligand>
</feature>
<feature type="binding site" evidence="1">
    <location>
        <begin position="654"/>
        <end position="661"/>
    </location>
    <ligand>
        <name>ATP</name>
        <dbReference type="ChEBI" id="CHEBI:30616"/>
    </ligand>
</feature>
<organism>
    <name type="scientific">Mycobacterium tuberculosis (strain CDC 1551 / Oshkosh)</name>
    <dbReference type="NCBI Taxonomy" id="83331"/>
    <lineage>
        <taxon>Bacteria</taxon>
        <taxon>Bacillati</taxon>
        <taxon>Actinomycetota</taxon>
        <taxon>Actinomycetes</taxon>
        <taxon>Mycobacteriales</taxon>
        <taxon>Mycobacteriaceae</taxon>
        <taxon>Mycobacterium</taxon>
        <taxon>Mycobacterium tuberculosis complex</taxon>
    </lineage>
</organism>
<reference key="1">
    <citation type="journal article" date="2002" name="J. Bacteriol.">
        <title>Whole-genome comparison of Mycobacterium tuberculosis clinical and laboratory strains.</title>
        <authorList>
            <person name="Fleischmann R.D."/>
            <person name="Alland D."/>
            <person name="Eisen J.A."/>
            <person name="Carpenter L."/>
            <person name="White O."/>
            <person name="Peterson J.D."/>
            <person name="DeBoy R.T."/>
            <person name="Dodson R.J."/>
            <person name="Gwinn M.L."/>
            <person name="Haft D.H."/>
            <person name="Hickey E.K."/>
            <person name="Kolonay J.F."/>
            <person name="Nelson W.C."/>
            <person name="Umayam L.A."/>
            <person name="Ermolaeva M.D."/>
            <person name="Salzberg S.L."/>
            <person name="Delcher A."/>
            <person name="Utterback T.R."/>
            <person name="Weidman J.F."/>
            <person name="Khouri H.M."/>
            <person name="Gill J."/>
            <person name="Mikula A."/>
            <person name="Bishai W."/>
            <person name="Jacobs W.R. Jr."/>
            <person name="Venter J.C."/>
            <person name="Fraser C.M."/>
        </authorList>
    </citation>
    <scope>NUCLEOTIDE SEQUENCE [LARGE SCALE GENOMIC DNA]</scope>
    <source>
        <strain>CDC 1551 / Oshkosh</strain>
    </source>
</reference>
<comment type="function">
    <text evidence="1">The UvrABC repair system catalyzes the recognition and processing of DNA lesions. UvrA is an ATPase and a DNA-binding protein. A damage recognition complex composed of 2 UvrA and 2 UvrB subunits scans DNA for abnormalities. When the presence of a lesion has been verified by UvrB, the UvrA molecules dissociate.</text>
</comment>
<comment type="subunit">
    <text evidence="1">Forms a heterotetramer with UvrB during the search for lesions.</text>
</comment>
<comment type="subcellular location">
    <subcellularLocation>
        <location evidence="1">Cytoplasm</location>
    </subcellularLocation>
</comment>
<comment type="similarity">
    <text evidence="1">Belongs to the ABC transporter superfamily. UvrA family.</text>
</comment>
<comment type="sequence caution" evidence="2">
    <conflict type="erroneous initiation">
        <sequence resource="EMBL-CDS" id="AAK45944"/>
    </conflict>
    <text>Extended N-terminus.</text>
</comment>
<gene>
    <name evidence="1" type="primary">uvrA</name>
    <name type="ordered locus">MT1675</name>
</gene>
<dbReference type="EMBL" id="AE000516">
    <property type="protein sequence ID" value="AAK45944.1"/>
    <property type="status" value="ALT_INIT"/>
    <property type="molecule type" value="Genomic_DNA"/>
</dbReference>
<dbReference type="PIR" id="A70619">
    <property type="entry name" value="A70619"/>
</dbReference>
<dbReference type="RefSeq" id="WP_003408092.1">
    <property type="nucleotide sequence ID" value="NZ_KK341227.1"/>
</dbReference>
<dbReference type="SMR" id="P9WQK6"/>
<dbReference type="KEGG" id="mtc:MT1675"/>
<dbReference type="PATRIC" id="fig|83331.31.peg.1801"/>
<dbReference type="HOGENOM" id="CLU_001370_0_2_11"/>
<dbReference type="Proteomes" id="UP000001020">
    <property type="component" value="Chromosome"/>
</dbReference>
<dbReference type="GO" id="GO:0005737">
    <property type="term" value="C:cytoplasm"/>
    <property type="evidence" value="ECO:0007669"/>
    <property type="project" value="UniProtKB-SubCell"/>
</dbReference>
<dbReference type="GO" id="GO:0009380">
    <property type="term" value="C:excinuclease repair complex"/>
    <property type="evidence" value="ECO:0007669"/>
    <property type="project" value="InterPro"/>
</dbReference>
<dbReference type="GO" id="GO:0005524">
    <property type="term" value="F:ATP binding"/>
    <property type="evidence" value="ECO:0007669"/>
    <property type="project" value="UniProtKB-UniRule"/>
</dbReference>
<dbReference type="GO" id="GO:0016887">
    <property type="term" value="F:ATP hydrolysis activity"/>
    <property type="evidence" value="ECO:0007669"/>
    <property type="project" value="InterPro"/>
</dbReference>
<dbReference type="GO" id="GO:0003677">
    <property type="term" value="F:DNA binding"/>
    <property type="evidence" value="ECO:0007669"/>
    <property type="project" value="UniProtKB-UniRule"/>
</dbReference>
<dbReference type="GO" id="GO:0009381">
    <property type="term" value="F:excinuclease ABC activity"/>
    <property type="evidence" value="ECO:0007669"/>
    <property type="project" value="UniProtKB-UniRule"/>
</dbReference>
<dbReference type="GO" id="GO:0008270">
    <property type="term" value="F:zinc ion binding"/>
    <property type="evidence" value="ECO:0007669"/>
    <property type="project" value="UniProtKB-UniRule"/>
</dbReference>
<dbReference type="GO" id="GO:0006289">
    <property type="term" value="P:nucleotide-excision repair"/>
    <property type="evidence" value="ECO:0007669"/>
    <property type="project" value="UniProtKB-UniRule"/>
</dbReference>
<dbReference type="GO" id="GO:0009432">
    <property type="term" value="P:SOS response"/>
    <property type="evidence" value="ECO:0007669"/>
    <property type="project" value="UniProtKB-UniRule"/>
</dbReference>
<dbReference type="CDD" id="cd03270">
    <property type="entry name" value="ABC_UvrA_I"/>
    <property type="match status" value="1"/>
</dbReference>
<dbReference type="CDD" id="cd03271">
    <property type="entry name" value="ABC_UvrA_II"/>
    <property type="match status" value="1"/>
</dbReference>
<dbReference type="FunFam" id="1.10.8.280:FF:000002">
    <property type="entry name" value="UvrABC system protein A"/>
    <property type="match status" value="1"/>
</dbReference>
<dbReference type="FunFam" id="1.20.1580.10:FF:000001">
    <property type="entry name" value="UvrABC system protein A"/>
    <property type="match status" value="3"/>
</dbReference>
<dbReference type="FunFam" id="1.20.1580.10:FF:000002">
    <property type="entry name" value="UvrABC system protein A"/>
    <property type="match status" value="1"/>
</dbReference>
<dbReference type="FunFam" id="3.30.190.20:FF:000003">
    <property type="entry name" value="UvrABC system protein A"/>
    <property type="match status" value="1"/>
</dbReference>
<dbReference type="Gene3D" id="3.30.190.20">
    <property type="match status" value="1"/>
</dbReference>
<dbReference type="Gene3D" id="1.10.8.280">
    <property type="entry name" value="ABC transporter ATPase domain-like"/>
    <property type="match status" value="1"/>
</dbReference>
<dbReference type="Gene3D" id="1.20.1580.10">
    <property type="entry name" value="ABC transporter ATPase like domain"/>
    <property type="match status" value="3"/>
</dbReference>
<dbReference type="Gene3D" id="3.40.50.300">
    <property type="entry name" value="P-loop containing nucleotide triphosphate hydrolases"/>
    <property type="match status" value="3"/>
</dbReference>
<dbReference type="HAMAP" id="MF_00205">
    <property type="entry name" value="UvrA"/>
    <property type="match status" value="1"/>
</dbReference>
<dbReference type="InterPro" id="IPR003439">
    <property type="entry name" value="ABC_transporter-like_ATP-bd"/>
</dbReference>
<dbReference type="InterPro" id="IPR017871">
    <property type="entry name" value="ABC_transporter-like_CS"/>
</dbReference>
<dbReference type="InterPro" id="IPR027417">
    <property type="entry name" value="P-loop_NTPase"/>
</dbReference>
<dbReference type="InterPro" id="IPR004602">
    <property type="entry name" value="UvrA"/>
</dbReference>
<dbReference type="InterPro" id="IPR041552">
    <property type="entry name" value="UvrA_DNA-bd"/>
</dbReference>
<dbReference type="InterPro" id="IPR041102">
    <property type="entry name" value="UvrA_inter"/>
</dbReference>
<dbReference type="NCBIfam" id="NF001503">
    <property type="entry name" value="PRK00349.1"/>
    <property type="match status" value="1"/>
</dbReference>
<dbReference type="NCBIfam" id="TIGR00630">
    <property type="entry name" value="uvra"/>
    <property type="match status" value="1"/>
</dbReference>
<dbReference type="PANTHER" id="PTHR43152">
    <property type="entry name" value="UVRABC SYSTEM PROTEIN A"/>
    <property type="match status" value="1"/>
</dbReference>
<dbReference type="PANTHER" id="PTHR43152:SF3">
    <property type="entry name" value="UVRABC SYSTEM PROTEIN A"/>
    <property type="match status" value="1"/>
</dbReference>
<dbReference type="Pfam" id="PF17755">
    <property type="entry name" value="UvrA_DNA-bind"/>
    <property type="match status" value="1"/>
</dbReference>
<dbReference type="Pfam" id="PF17760">
    <property type="entry name" value="UvrA_inter"/>
    <property type="match status" value="1"/>
</dbReference>
<dbReference type="SUPFAM" id="SSF52540">
    <property type="entry name" value="P-loop containing nucleoside triphosphate hydrolases"/>
    <property type="match status" value="2"/>
</dbReference>
<dbReference type="PROSITE" id="PS00211">
    <property type="entry name" value="ABC_TRANSPORTER_1"/>
    <property type="match status" value="2"/>
</dbReference>
<dbReference type="PROSITE" id="PS50893">
    <property type="entry name" value="ABC_TRANSPORTER_2"/>
    <property type="match status" value="1"/>
</dbReference>
<sequence>MADRLIVKGAREHNLRSVDLDLPRDALIVFTGLSGSGKSSLAFDTIFAEGQRRYVESLSAYARQFLGQMDKPDVDFIEGLSPAVSIDQKSTNRNPRSTVGTITEVYDYLRLLYARAGTPHCPTCGERVARQTPQQIVDQVLAMPEGTRFLVLAPVVRTRKGEFADLFDKLNAQGYSRVRVDGVVHPLTDPPKLKKQEKHDIEVVVDRLTVKAAAKRRLTDSVETALNLADGIVVLEFVDHELGAPHREQRFSEKLACPNGHALAVDDLEPRSFSFNSPYGACPECSGLGIRKEVDPELVVPDPDRTLAQGAVAPWSNGHTAEYFTRMMAGLGEALGFDVDTPWRKLPAKARKAILEGADEQVHVRYRNRYGRTRSYYADFEGVLAFLQRKMSQTESEQMKERYEGFMRDVPCPVCAGTRLKPEILAVTLAGESKGEHGAKSIAEVCELSIADCADFLNALTLGPREQAIAGQVLKEIRSRLGFLLDVGLEYLSLSRAAATLSGGEAQRIRLATQIGSGLVGVLYVLDEPSIGLHQRDNRRLIETLTRLRDLGNTLIVVEHDEDTIEHADWIVDIGPGAGEHGGRIVHSGPYDELLRNKDSITGAYLSGRESIEIPAIRRSVDPRRQLTVVGAREHNLRGIDVSFPLGVLTSVTGVSGSGKSTLVNDILAAVLANRLNGARQVPGRHTRVTGLDYLDKLVRVDQSPIGRTPRSNPATYTGVFDKIRTLFAATTEAKVRGYQPGRFSFNVKGGRCEACTGDGTIKIEMNFLPDVYVPCEVCQGARYNRETLEVHYKGKTVSEVLDMSIEEAAEFFEPIAGVHRYLRTLVDVGLGYVRLGQPAPTLSGGEAQRVKLASELQKRSTGRTVYILDEPTTGLHFDDIRKLLNVINGLVDKGNTVIVIEHNLDVIKTSDWIIDLGPEGGAGGGTVVAQGTPEDVAAVPASYTGKFLAEVVGGGASAATSRSNRRRNVSA</sequence>